<feature type="chain" id="PRO_1000132427" description="Glycine cleavage system H protein">
    <location>
        <begin position="1"/>
        <end position="134"/>
    </location>
</feature>
<feature type="domain" description="Lipoyl-binding" evidence="2">
    <location>
        <begin position="24"/>
        <end position="106"/>
    </location>
</feature>
<feature type="modified residue" description="N6-lipoyllysine" evidence="1">
    <location>
        <position position="65"/>
    </location>
</feature>
<evidence type="ECO:0000255" key="1">
    <source>
        <dbReference type="HAMAP-Rule" id="MF_00272"/>
    </source>
</evidence>
<evidence type="ECO:0000255" key="2">
    <source>
        <dbReference type="PROSITE-ProRule" id="PRU01066"/>
    </source>
</evidence>
<sequence length="134" mass="14180">MSDIPSDLHYTAEHEWIRRSGDDTVRVGITDYAQSALGDVVFVQLPVIGTAVTAGETFGEVESTKSVSDLYAPISGKVSAVNSDLDGTPQLVNSDPYGAGWLLDIQVDSSDVAALESALTTLLDAEAYRGTLTE</sequence>
<dbReference type="EMBL" id="AP010918">
    <property type="protein sequence ID" value="BAH26132.1"/>
    <property type="molecule type" value="Genomic_DNA"/>
</dbReference>
<dbReference type="RefSeq" id="WP_003409234.1">
    <property type="nucleotide sequence ID" value="NZ_CP014566.1"/>
</dbReference>
<dbReference type="SMR" id="C1APA3"/>
<dbReference type="KEGG" id="mbt:JTY_1845"/>
<dbReference type="HOGENOM" id="CLU_097408_2_2_11"/>
<dbReference type="GO" id="GO:0005829">
    <property type="term" value="C:cytosol"/>
    <property type="evidence" value="ECO:0007669"/>
    <property type="project" value="TreeGrafter"/>
</dbReference>
<dbReference type="GO" id="GO:0005960">
    <property type="term" value="C:glycine cleavage complex"/>
    <property type="evidence" value="ECO:0007669"/>
    <property type="project" value="InterPro"/>
</dbReference>
<dbReference type="GO" id="GO:0019464">
    <property type="term" value="P:glycine decarboxylation via glycine cleavage system"/>
    <property type="evidence" value="ECO:0007669"/>
    <property type="project" value="UniProtKB-UniRule"/>
</dbReference>
<dbReference type="CDD" id="cd06848">
    <property type="entry name" value="GCS_H"/>
    <property type="match status" value="1"/>
</dbReference>
<dbReference type="Gene3D" id="2.40.50.100">
    <property type="match status" value="1"/>
</dbReference>
<dbReference type="HAMAP" id="MF_00272">
    <property type="entry name" value="GcvH"/>
    <property type="match status" value="1"/>
</dbReference>
<dbReference type="InterPro" id="IPR003016">
    <property type="entry name" value="2-oxoA_DH_lipoyl-BS"/>
</dbReference>
<dbReference type="InterPro" id="IPR000089">
    <property type="entry name" value="Biotin_lipoyl"/>
</dbReference>
<dbReference type="InterPro" id="IPR002930">
    <property type="entry name" value="GCV_H"/>
</dbReference>
<dbReference type="InterPro" id="IPR033753">
    <property type="entry name" value="GCV_H/Fam206"/>
</dbReference>
<dbReference type="InterPro" id="IPR017453">
    <property type="entry name" value="GCV_H_sub"/>
</dbReference>
<dbReference type="InterPro" id="IPR011053">
    <property type="entry name" value="Single_hybrid_motif"/>
</dbReference>
<dbReference type="NCBIfam" id="TIGR00527">
    <property type="entry name" value="gcvH"/>
    <property type="match status" value="1"/>
</dbReference>
<dbReference type="NCBIfam" id="NF002270">
    <property type="entry name" value="PRK01202.1"/>
    <property type="match status" value="1"/>
</dbReference>
<dbReference type="PANTHER" id="PTHR11715">
    <property type="entry name" value="GLYCINE CLEAVAGE SYSTEM H PROTEIN"/>
    <property type="match status" value="1"/>
</dbReference>
<dbReference type="PANTHER" id="PTHR11715:SF3">
    <property type="entry name" value="GLYCINE CLEAVAGE SYSTEM H PROTEIN-RELATED"/>
    <property type="match status" value="1"/>
</dbReference>
<dbReference type="Pfam" id="PF01597">
    <property type="entry name" value="GCV_H"/>
    <property type="match status" value="1"/>
</dbReference>
<dbReference type="SUPFAM" id="SSF51230">
    <property type="entry name" value="Single hybrid motif"/>
    <property type="match status" value="1"/>
</dbReference>
<dbReference type="PROSITE" id="PS50968">
    <property type="entry name" value="BIOTINYL_LIPOYL"/>
    <property type="match status" value="1"/>
</dbReference>
<dbReference type="PROSITE" id="PS00189">
    <property type="entry name" value="LIPOYL"/>
    <property type="match status" value="1"/>
</dbReference>
<accession>C1APA3</accession>
<proteinExistence type="inferred from homology"/>
<name>GCSH_MYCBT</name>
<protein>
    <recommendedName>
        <fullName evidence="1">Glycine cleavage system H protein</fullName>
    </recommendedName>
</protein>
<comment type="function">
    <text evidence="1">The glycine cleavage system catalyzes the degradation of glycine. The H protein shuttles the methylamine group of glycine from the P protein to the T protein.</text>
</comment>
<comment type="cofactor">
    <cofactor evidence="1">
        <name>(R)-lipoate</name>
        <dbReference type="ChEBI" id="CHEBI:83088"/>
    </cofactor>
    <text evidence="1">Binds 1 lipoyl cofactor covalently.</text>
</comment>
<comment type="subunit">
    <text evidence="1">The glycine cleavage system is composed of four proteins: P, T, L and H.</text>
</comment>
<comment type="similarity">
    <text evidence="1">Belongs to the GcvH family.</text>
</comment>
<gene>
    <name evidence="1" type="primary">gcvH</name>
    <name type="ordered locus">JTY_1845</name>
</gene>
<keyword id="KW-0450">Lipoyl</keyword>
<reference key="1">
    <citation type="journal article" date="2009" name="Vaccine">
        <title>Whole genome sequence analysis of Mycobacterium bovis bacillus Calmette-Guerin (BCG) Tokyo 172: a comparative study of BCG vaccine substrains.</title>
        <authorList>
            <person name="Seki M."/>
            <person name="Honda I."/>
            <person name="Fujita I."/>
            <person name="Yano I."/>
            <person name="Yamamoto S."/>
            <person name="Koyama A."/>
        </authorList>
    </citation>
    <scope>NUCLEOTIDE SEQUENCE [LARGE SCALE GENOMIC DNA]</scope>
    <source>
        <strain>BCG / Tokyo 172 / ATCC 35737 / TMC 1019</strain>
    </source>
</reference>
<organism>
    <name type="scientific">Mycobacterium bovis (strain BCG / Tokyo 172 / ATCC 35737 / TMC 1019)</name>
    <dbReference type="NCBI Taxonomy" id="561275"/>
    <lineage>
        <taxon>Bacteria</taxon>
        <taxon>Bacillati</taxon>
        <taxon>Actinomycetota</taxon>
        <taxon>Actinomycetes</taxon>
        <taxon>Mycobacteriales</taxon>
        <taxon>Mycobacteriaceae</taxon>
        <taxon>Mycobacterium</taxon>
        <taxon>Mycobacterium tuberculosis complex</taxon>
    </lineage>
</organism>